<proteinExistence type="evidence at protein level"/>
<sequence length="37" mass="4065">GKLSGISKVLRAIAKFFKGVGKARKQFKEASDLDKNQ</sequence>
<evidence type="ECO:0000269" key="1">
    <source>
    </source>
</evidence>
<evidence type="ECO:0000305" key="2"/>
<organism>
    <name type="scientific">Oxyopes takobius</name>
    <name type="common">Lynx spider</name>
    <name type="synonym">Oxyopes foliiformis</name>
    <dbReference type="NCBI Taxonomy" id="666126"/>
    <lineage>
        <taxon>Eukaryota</taxon>
        <taxon>Metazoa</taxon>
        <taxon>Ecdysozoa</taxon>
        <taxon>Arthropoda</taxon>
        <taxon>Chelicerata</taxon>
        <taxon>Arachnida</taxon>
        <taxon>Araneae</taxon>
        <taxon>Araneomorphae</taxon>
        <taxon>Entelegynae</taxon>
        <taxon>Lycosoidea</taxon>
        <taxon>Oxyopidae</taxon>
        <taxon>Oxyopes</taxon>
    </lineage>
</organism>
<comment type="function">
    <text evidence="1">Disrupts biological membranes, particularly those rich in phosphocholine. Has antimicrobial activity against Gram-negative bacterium E.coli, Gram-positive bacteria B.subtilis and S.aureus, and hemolytic activity against sheep, pig and guinea pig red blood cells. Has insecticidal activity against S.frugiperda ovarian cells by opening non-selective ion channels. Enhances the insecticidal activity of spider venom neurotoxic peptides.</text>
</comment>
<comment type="subcellular location">
    <subcellularLocation>
        <location evidence="1">Secreted</location>
    </subcellularLocation>
</comment>
<comment type="tissue specificity">
    <text evidence="1">Expressed by the venom gland.</text>
</comment>
<comment type="mass spectrometry" mass="4064.7" method="MALDI" evidence="1"/>
<comment type="similarity">
    <text evidence="2">Belongs to the cationic peptide 02 (oxyopinin-2) family.</text>
</comment>
<name>TOP2C_OXYTA</name>
<feature type="peptide" id="PRO_0000045033" description="M-oxotoxin-Ot2c">
    <location>
        <begin position="1"/>
        <end position="37"/>
    </location>
</feature>
<reference key="1">
    <citation type="journal article" date="2002" name="J. Biol. Chem.">
        <title>Oxyopinins, large amphipathic peptides isolated from the venom of the wolf spider Oxyopes kitabensis with cytolytic properties and positive insecticidal cooperativity with spider neurotoxins.</title>
        <authorList>
            <person name="Corzo G."/>
            <person name="Villegas E."/>
            <person name="Gomez-Lagunas F."/>
            <person name="Possani L.D."/>
            <person name="Belokoneva O.S."/>
            <person name="Nakajima T."/>
        </authorList>
    </citation>
    <scope>PROTEIN SEQUENCE</scope>
    <scope>FUNCTION</scope>
    <scope>TISSUE SPECIFICITY</scope>
    <scope>SUBCELLULAR LOCATION</scope>
    <scope>MASS SPECTROMETRY</scope>
    <scope>CIRCULAR DICHROISM ANALYSIS</scope>
    <source>
        <tissue>Venom</tissue>
    </source>
</reference>
<accession>P83250</accession>
<keyword id="KW-0044">Antibiotic</keyword>
<keyword id="KW-0929">Antimicrobial</keyword>
<keyword id="KW-0204">Cytolysis</keyword>
<keyword id="KW-0903">Direct protein sequencing</keyword>
<keyword id="KW-0354">Hemolysis</keyword>
<keyword id="KW-0964">Secreted</keyword>
<keyword id="KW-0800">Toxin</keyword>
<dbReference type="SMR" id="P83250"/>
<dbReference type="TCDB" id="1.C.68.1.2">
    <property type="family name" value="the channel-forming oxyopinin peptide (oxyopinin) family"/>
</dbReference>
<dbReference type="ArachnoServer" id="AS000188">
    <property type="toxin name" value="M-oxotoxin-Ot2c"/>
</dbReference>
<dbReference type="GO" id="GO:0005576">
    <property type="term" value="C:extracellular region"/>
    <property type="evidence" value="ECO:0007669"/>
    <property type="project" value="UniProtKB-SubCell"/>
</dbReference>
<dbReference type="GO" id="GO:0090729">
    <property type="term" value="F:toxin activity"/>
    <property type="evidence" value="ECO:0007669"/>
    <property type="project" value="UniProtKB-KW"/>
</dbReference>
<dbReference type="GO" id="GO:0042742">
    <property type="term" value="P:defense response to bacterium"/>
    <property type="evidence" value="ECO:0007669"/>
    <property type="project" value="UniProtKB-KW"/>
</dbReference>
<dbReference type="GO" id="GO:0019836">
    <property type="term" value="P:symbiont-mediated hemolysis of host erythrocyte"/>
    <property type="evidence" value="ECO:0007669"/>
    <property type="project" value="InterPro"/>
</dbReference>
<dbReference type="InterPro" id="IPR012522">
    <property type="entry name" value="Antimicrobial_3"/>
</dbReference>
<dbReference type="Pfam" id="PF08025">
    <property type="entry name" value="Antimicrobial_3"/>
    <property type="match status" value="1"/>
</dbReference>
<protein>
    <recommendedName>
        <fullName>M-oxotoxin-Ot2c</fullName>
        <shortName>M-OXTX-Ot2c</shortName>
    </recommendedName>
    <alternativeName>
        <fullName>Oxki2c</fullName>
    </alternativeName>
    <alternativeName>
        <fullName>Oxyopinin-2c</fullName>
    </alternativeName>
</protein>